<proteinExistence type="evidence at transcript level"/>
<keyword id="KW-0175">Coiled coil</keyword>
<keyword id="KW-0677">Repeat</keyword>
<feature type="chain" id="PRO_0000205664" description="Tropomyosin">
    <location>
        <begin position="1"/>
        <end position="284"/>
    </location>
</feature>
<feature type="region of interest" description="Disordered" evidence="2">
    <location>
        <begin position="103"/>
        <end position="133"/>
    </location>
</feature>
<feature type="coiled-coil region" evidence="1">
    <location>
        <begin position="1"/>
        <end position="284"/>
    </location>
</feature>
<reference key="1">
    <citation type="submission" date="1998-12" db="EMBL/GenBank/DDBJ databases">
        <title>Chlamys nipponensis mRNA for tropomyosin, complete cds.</title>
        <authorList>
            <person name="Nishita K."/>
            <person name="Inoue A."/>
            <person name="Ojima T."/>
        </authorList>
    </citation>
    <scope>NUCLEOTIDE SEQUENCE [MRNA]</scope>
</reference>
<dbReference type="EMBL" id="AB021681">
    <property type="protein sequence ID" value="BAA36219.1"/>
    <property type="molecule type" value="mRNA"/>
</dbReference>
<dbReference type="SMR" id="O02389"/>
<dbReference type="FunFam" id="1.20.5.170:FF:000001">
    <property type="entry name" value="Tropomyosin alpha-1 chain isoform 1"/>
    <property type="match status" value="1"/>
</dbReference>
<dbReference type="FunFam" id="1.20.5.340:FF:000001">
    <property type="entry name" value="Tropomyosin alpha-1 chain isoform 2"/>
    <property type="match status" value="1"/>
</dbReference>
<dbReference type="Gene3D" id="1.20.5.170">
    <property type="match status" value="2"/>
</dbReference>
<dbReference type="Gene3D" id="1.20.5.340">
    <property type="match status" value="1"/>
</dbReference>
<dbReference type="InterPro" id="IPR000533">
    <property type="entry name" value="Tropomyosin"/>
</dbReference>
<dbReference type="PANTHER" id="PTHR19269">
    <property type="entry name" value="TROPOMYOSIN"/>
    <property type="match status" value="1"/>
</dbReference>
<dbReference type="Pfam" id="PF00261">
    <property type="entry name" value="Tropomyosin"/>
    <property type="match status" value="1"/>
</dbReference>
<dbReference type="PRINTS" id="PR00194">
    <property type="entry name" value="TROPOMYOSIN"/>
</dbReference>
<dbReference type="SUPFAM" id="SSF57997">
    <property type="entry name" value="Tropomyosin"/>
    <property type="match status" value="1"/>
</dbReference>
<dbReference type="PROSITE" id="PS00326">
    <property type="entry name" value="TROPOMYOSIN"/>
    <property type="match status" value="1"/>
</dbReference>
<accession>O02389</accession>
<name>TPM_CHLNI</name>
<evidence type="ECO:0000250" key="1"/>
<evidence type="ECO:0000256" key="2">
    <source>
        <dbReference type="SAM" id="MobiDB-lite"/>
    </source>
</evidence>
<evidence type="ECO:0000305" key="3"/>
<protein>
    <recommendedName>
        <fullName>Tropomyosin</fullName>
    </recommendedName>
</protein>
<organism>
    <name type="scientific">Chlamys nipponensis akazara</name>
    <name type="common">Akazara scallop</name>
    <name type="synonym">Japanese scallop</name>
    <dbReference type="NCBI Taxonomy" id="6571"/>
    <lineage>
        <taxon>Eukaryota</taxon>
        <taxon>Metazoa</taxon>
        <taxon>Spiralia</taxon>
        <taxon>Lophotrochozoa</taxon>
        <taxon>Mollusca</taxon>
        <taxon>Bivalvia</taxon>
        <taxon>Autobranchia</taxon>
        <taxon>Pteriomorphia</taxon>
        <taxon>Pectinida</taxon>
        <taxon>Pectinoidea</taxon>
        <taxon>Pectinidae</taxon>
        <taxon>Chlamys</taxon>
    </lineage>
</organism>
<comment type="function">
    <text>Tropomyosin, in association with the troponin complex, plays a central role in the calcium dependent regulation of muscle contraction.</text>
</comment>
<comment type="subunit">
    <text evidence="1">Homodimer.</text>
</comment>
<comment type="domain">
    <text>The molecule is in a coiled coil structure that is formed by 2 polypeptide chains. The sequence exhibits a prominent seven-residues periodicity.</text>
</comment>
<comment type="similarity">
    <text evidence="3">Belongs to the tropomyosin family.</text>
</comment>
<sequence length="284" mass="32542">MDAIKKKMQAMKVDRENAQDLAEQMEQKLKDTETAKAKLEEDFNDLQKKLTTTENNFDVANEQLQEANTKLENSDKQITQLESDVGALQRRLQLLEEDFERSEEKLATTTEKLEEASKAADESERNRKVLEGRSNTAEERIDVLEKQLETAKNVATDADQKFDEAARKLAITEVDLERAETRLEAADAKVHELEEELTVVGANIKTLQVQNDQASQREDSYEETIRDLSKNLKDAETRATEAERQLTKLQKEVDRLEDELLAEKERYKAISDELDQTFAEIAGY</sequence>